<sequence length="1057" mass="119109">MPGSRRVRPRLRALLLLPPLLLLRSGHASDLTVAVVLPLTNTSYPWSWARVGPAVELALGRVKARPDLLPGWTVRMVLGSSENAAGVCSDTAAPLAAVDLKWEHSPAVFLGPGCVYSAAPVGRFTAHWRVPLLTAGAPALGIGVKDEYALTTRTGPSHVKLGDFVTALHRRLGWEHQALVLYADRLGDDRPCFFIVEGLYMRVRERLNITVNHQEFVEGDPDHYTKLLRTVQRKGRVIYICSSPDAFRNLMLLALDAGLTGEDYVFFHLDVFGQSLQGAQGPVPRKPWERDDGQDRRARQAFQAAKIITYKEPDNPEYLEFLKQLKLLADKKFNFTMEDGLKNIIPASFHDGLLLYVQAVTETLAQGGTVTDGENITQRMWNRSFQGVTGYLKIDRNGDRDTDFSLWDMDPETGAFRVVLNFNGTSQELMAVSEHRLYWPLGYPPPDIPKCGFDNEDPACNQDHFSTLEVLALVGSLSLVSFLIVSFFIYRKMQLEKELVSELWRVRWEDLQPSSLERHLRSAGSRLTLSGRGSNYGSLLTTEGQFQVFAKTAYYKGNLVAVKRVNRKRIELTRKVLFELKHMRDVQNEHLTRFVGACTDPPNICILTEYCPRGSLQDILENESITLDWMFRYSLTNDIVKGMLFLHNGAIGSHGNLKSSNCVVDGRFVLKITDYGLESFRDPEPEQGHTLFAKKLWTAPELLRMASPPARGSQAGDVYSFGIILQEIALRSGVFYVEGLDLSPKEIIERVTRGEQPPFRPSMDLQSHLEELGQLMQRCWAEDPQERPPFQQIRLALRKFNKENSSNILDNLLSRMEQYANNLEELVEERTQAYLEEKRKAEALLYQILPHSVAEQLKRGETVQAEAFDSVTIYFSDIVGFTALSAESTPMQVVTLLNDLYTCFDAVIDNFDVYKVETIGDAYMVVSGLPVRNGQLHAREVARMALALLDAVRSFRIRHRPQEQLRLRIGIHTGPVCAGVVGLKMPRYCLFGDTVNTASRMESNGEALRIHLSSETKAVLEEFDGFELELRGDVEMKGKGKVRTYWLLGERGCSTRG</sequence>
<feature type="signal peptide">
    <location>
        <begin position="1"/>
        <end position="28"/>
    </location>
</feature>
<feature type="chain" id="PRO_0000012361" description="Atrial natriuretic peptide receptor 1">
    <location>
        <begin position="29"/>
        <end position="1057"/>
    </location>
</feature>
<feature type="topological domain" description="Extracellular" evidence="4">
    <location>
        <begin position="29"/>
        <end position="469"/>
    </location>
</feature>
<feature type="transmembrane region" description="Helical" evidence="4">
    <location>
        <begin position="470"/>
        <end position="490"/>
    </location>
</feature>
<feature type="topological domain" description="Cytoplasmic" evidence="4">
    <location>
        <begin position="491"/>
        <end position="1057"/>
    </location>
</feature>
<feature type="domain" description="Protein kinase" evidence="6">
    <location>
        <begin position="524"/>
        <end position="801"/>
    </location>
</feature>
<feature type="domain" description="Guanylate cyclase" evidence="5">
    <location>
        <begin position="872"/>
        <end position="1002"/>
    </location>
</feature>
<feature type="binding site" evidence="1">
    <location>
        <position position="81"/>
    </location>
    <ligand>
        <name>chloride</name>
        <dbReference type="ChEBI" id="CHEBI:17996"/>
    </ligand>
</feature>
<feature type="binding site" evidence="1">
    <location>
        <position position="113"/>
    </location>
    <ligand>
        <name>chloride</name>
        <dbReference type="ChEBI" id="CHEBI:17996"/>
    </ligand>
</feature>
<feature type="binding site" evidence="1">
    <location>
        <position position="114"/>
    </location>
    <ligand>
        <name>chloride</name>
        <dbReference type="ChEBI" id="CHEBI:17996"/>
    </ligand>
</feature>
<feature type="modified residue" description="Phosphoserine" evidence="2">
    <location>
        <position position="515"/>
    </location>
</feature>
<feature type="modified residue" description="Phosphoserine" evidence="2">
    <location>
        <position position="525"/>
    </location>
</feature>
<feature type="modified residue" description="Phosphothreonine" evidence="2">
    <location>
        <position position="528"/>
    </location>
</feature>
<feature type="modified residue" description="Phosphoserine" evidence="2">
    <location>
        <position position="530"/>
    </location>
</feature>
<feature type="modified residue" description="Phosphoserine" evidence="2">
    <location>
        <position position="534"/>
    </location>
</feature>
<feature type="modified residue" description="Phosphoserine" evidence="3">
    <location>
        <position position="538"/>
    </location>
</feature>
<feature type="modified residue" description="Phosphothreonine" evidence="3">
    <location>
        <position position="541"/>
    </location>
</feature>
<feature type="glycosylation site" description="N-linked (GlcNAc...) asparagine" evidence="4">
    <location>
        <position position="41"/>
    </location>
</feature>
<feature type="glycosylation site" description="N-linked (GlcNAc...) asparagine" evidence="4">
    <location>
        <position position="208"/>
    </location>
</feature>
<feature type="glycosylation site" description="N-linked (GlcNAc...) asparagine" evidence="4">
    <location>
        <position position="334"/>
    </location>
</feature>
<feature type="glycosylation site" description="N-linked (GlcNAc...) asparagine" evidence="4">
    <location>
        <position position="375"/>
    </location>
</feature>
<feature type="glycosylation site" description="N-linked (GlcNAc...) asparagine" evidence="4">
    <location>
        <position position="382"/>
    </location>
</feature>
<feature type="glycosylation site" description="N-linked (GlcNAc...) asparagine" evidence="4">
    <location>
        <position position="423"/>
    </location>
</feature>
<feature type="disulfide bond" evidence="3">
    <location>
        <begin position="88"/>
        <end position="114"/>
    </location>
</feature>
<feature type="disulfide bond" evidence="3">
    <location>
        <begin position="192"/>
        <end position="241"/>
    </location>
</feature>
<feature type="disulfide bond" evidence="3">
    <location>
        <begin position="451"/>
        <end position="460"/>
    </location>
</feature>
<feature type="sequence conflict" description="In Ref. 1; AAA37670." evidence="9" ref="1">
    <original>G</original>
    <variation>R</variation>
    <location>
        <position position="3"/>
    </location>
</feature>
<feature type="sequence conflict" description="In Ref. 1; AAA37670." evidence="9" ref="1">
    <original>L</original>
    <variation>V</variation>
    <location>
        <position position="39"/>
    </location>
</feature>
<feature type="sequence conflict" description="In Ref. 1; AAA37670." evidence="9" ref="1">
    <original>G</original>
    <variation>D</variation>
    <location>
        <position position="122"/>
    </location>
</feature>
<feature type="sequence conflict" description="In Ref. 1; AAA37670." evidence="9" ref="1">
    <original>V</original>
    <variation>L</variation>
    <location>
        <position position="130"/>
    </location>
</feature>
<feature type="sequence conflict" description="In Ref. 1; AAA37670." evidence="9" ref="1">
    <original>R</original>
    <variation>E</variation>
    <location>
        <position position="285"/>
    </location>
</feature>
<feature type="sequence conflict" description="In Ref. 1; AAA37670." evidence="9" ref="1">
    <original>A</original>
    <variation>R</variation>
    <location>
        <position position="301"/>
    </location>
</feature>
<feature type="sequence conflict" description="In Ref. 1; AAA37670." evidence="9" ref="1">
    <original>FS</original>
    <variation>SP</variation>
    <location>
        <begin position="404"/>
        <end position="405"/>
    </location>
</feature>
<feature type="sequence conflict" description="In Ref. 1; AAA37670." evidence="9" ref="1">
    <original>H</original>
    <variation>Q</variation>
    <location>
        <position position="590"/>
    </location>
</feature>
<feature type="sequence conflict" description="In Ref. 1; AAA37670." evidence="9" ref="1">
    <original>G</original>
    <variation>C</variation>
    <location>
        <position position="652"/>
    </location>
</feature>
<feature type="sequence conflict" description="In Ref. 1; AAA37670." evidence="9" ref="1">
    <original>A</original>
    <variation>P</variation>
    <location>
        <position position="833"/>
    </location>
</feature>
<feature type="sequence conflict" description="In Ref. 1; AAA37670." evidence="9" ref="1">
    <original>R</original>
    <variation>G</variation>
    <location>
        <position position="958"/>
    </location>
</feature>
<feature type="sequence conflict" description="In Ref. 1; AAA37670." evidence="9" ref="1">
    <original>T</original>
    <variation>S</variation>
    <location>
        <position position="1044"/>
    </location>
</feature>
<feature type="sequence conflict" description="In Ref. 1; AAA37670." evidence="9" ref="1">
    <original>E</original>
    <variation>D</variation>
    <location>
        <position position="1050"/>
    </location>
</feature>
<feature type="sequence conflict" description="In Ref. 1; AAA37670." evidence="9" ref="1">
    <original>TRG</original>
    <variation>SRA</variation>
    <location>
        <begin position="1055"/>
        <end position="1057"/>
    </location>
</feature>
<accession>P18293</accession>
<proteinExistence type="evidence at protein level"/>
<evidence type="ECO:0000250" key="1"/>
<evidence type="ECO:0000250" key="2">
    <source>
        <dbReference type="UniProtKB" id="P16066"/>
    </source>
</evidence>
<evidence type="ECO:0000250" key="3">
    <source>
        <dbReference type="UniProtKB" id="P18910"/>
    </source>
</evidence>
<evidence type="ECO:0000255" key="4"/>
<evidence type="ECO:0000255" key="5">
    <source>
        <dbReference type="PROSITE-ProRule" id="PRU00099"/>
    </source>
</evidence>
<evidence type="ECO:0000255" key="6">
    <source>
        <dbReference type="PROSITE-ProRule" id="PRU00159"/>
    </source>
</evidence>
<evidence type="ECO:0000269" key="7">
    <source>
    </source>
</evidence>
<evidence type="ECO:0000269" key="8">
    <source>
    </source>
</evidence>
<evidence type="ECO:0000305" key="9"/>
<comment type="function">
    <text evidence="2 7">Receptor for the atrial natriuretic peptide NPPA/ANP and the brain natriuretic peptide NPPB/BNP which are potent vasoactive hormones playing a key role in cardiovascular homeostasis (PubMed:35794311). Plays an essential role in the regulation of endothelial cell senescence and vascular aging. Upon activation by ANP or BNP, stimulates the production of cyclic guanosine monophosphate (cGMP) that promotes vascular tone and volume homeostasis by activation of protein kinase cGMP-dependent 1/PRKG1 and subsequently PRKAA1, thereby controlling blood pressure and maintaining cardiovascular homeostasis.</text>
</comment>
<comment type="catalytic activity">
    <reaction evidence="2">
        <text>GTP = 3',5'-cyclic GMP + diphosphate</text>
        <dbReference type="Rhea" id="RHEA:13665"/>
        <dbReference type="ChEBI" id="CHEBI:33019"/>
        <dbReference type="ChEBI" id="CHEBI:37565"/>
        <dbReference type="ChEBI" id="CHEBI:57746"/>
        <dbReference type="EC" id="4.6.1.2"/>
    </reaction>
    <physiologicalReaction direction="left-to-right" evidence="2">
        <dbReference type="Rhea" id="RHEA:13666"/>
    </physiologicalReaction>
</comment>
<comment type="subunit">
    <text evidence="2">Homodimer.</text>
</comment>
<comment type="subcellular location">
    <subcellularLocation>
        <location>Membrane</location>
        <topology>Single-pass type I membrane protein</topology>
    </subcellularLocation>
</comment>
<comment type="PTM">
    <text evidence="1">Phosphorylation of the protein kinase-like domain is required for full activation by ANP.</text>
</comment>
<comment type="disruption phenotype">
    <text evidence="7 8">Npr1-deletion mice exhibit weight loss, elevated blood pressure, and postnatal death (PubMed:35794311). They display systemic hypertension associated with cardiac hypertrophy and ventricular enlargement (PubMed:35794311). In addition, a composition change of immune cells in the spleen can be observed (PubMed:35794311).</text>
</comment>
<comment type="similarity">
    <text evidence="5">Belongs to the adenylyl cyclase class-4/guanylyl cyclase family.</text>
</comment>
<reference key="1">
    <citation type="journal article" date="1990" name="J. Biol. Chem.">
        <title>Molecular cloning and expression of murine guanylate cyclase/atrial natriuretic factor receptor cDNA.</title>
        <authorList>
            <person name="Pandey K.N."/>
            <person name="Singh S."/>
        </authorList>
    </citation>
    <scope>NUCLEOTIDE SEQUENCE [MRNA]</scope>
    <source>
        <strain>C57BL/6J</strain>
    </source>
</reference>
<reference key="2">
    <citation type="journal article" date="1995" name="Mol. Pharmacol.">
        <title>Agonist selectivity for three species of natriuretic peptide receptor-A.</title>
        <authorList>
            <person name="Schoenfeld J.R."/>
            <person name="Sehl P."/>
            <person name="Quan C."/>
            <person name="Burnier J.P."/>
            <person name="Lowe D.G."/>
        </authorList>
    </citation>
    <scope>NUCLEOTIDE SEQUENCE [MRNA]</scope>
</reference>
<reference key="3">
    <citation type="journal article" date="1997" name="Proc. Natl. Acad. Sci. U.S.A.">
        <title>Hypertension, cardiac hypertrophy, and sudden death in mice lacking natriuretic peptide receptor A.</title>
        <authorList>
            <person name="Oliver P.M."/>
            <person name="Fox J.E."/>
            <person name="Kim R."/>
            <person name="Rockman H.A."/>
            <person name="Kim H.S."/>
            <person name="Reddick R.L."/>
            <person name="Pandey K.N."/>
            <person name="Milgram S.L."/>
            <person name="Smithies O."/>
            <person name="Maeda N."/>
        </authorList>
    </citation>
    <scope>DISRUPTION PHENOTYPE</scope>
</reference>
<reference key="4">
    <citation type="journal article" date="2010" name="Cell">
        <title>A tissue-specific atlas of mouse protein phosphorylation and expression.</title>
        <authorList>
            <person name="Huttlin E.L."/>
            <person name="Jedrychowski M.P."/>
            <person name="Elias J.E."/>
            <person name="Goswami T."/>
            <person name="Rad R."/>
            <person name="Beausoleil S.A."/>
            <person name="Villen J."/>
            <person name="Haas W."/>
            <person name="Sowa M.E."/>
            <person name="Gygi S.P."/>
        </authorList>
    </citation>
    <scope>IDENTIFICATION BY MASS SPECTROMETRY [LARGE SCALE ANALYSIS]</scope>
    <source>
        <tissue>Brown adipose tissue</tissue>
        <tissue>Kidney</tissue>
        <tissue>Liver</tissue>
        <tissue>Lung</tissue>
        <tissue>Testis</tissue>
    </source>
</reference>
<reference key="5">
    <citation type="journal article" date="2022" name="Inflammation">
        <title>Null Function of Npr1 Disturbs Immune Response in Colonic Inflammation During Early Postnatal Stage.</title>
        <authorList>
            <person name="Long C."/>
            <person name="Liu H."/>
            <person name="Zhan W."/>
            <person name="Chen L."/>
            <person name="Wu A."/>
            <person name="Yang L."/>
            <person name="Chen S."/>
        </authorList>
    </citation>
    <scope>FUNCTION</scope>
    <scope>DISRUPTION PHENOTYPE</scope>
</reference>
<organism>
    <name type="scientific">Mus musculus</name>
    <name type="common">Mouse</name>
    <dbReference type="NCBI Taxonomy" id="10090"/>
    <lineage>
        <taxon>Eukaryota</taxon>
        <taxon>Metazoa</taxon>
        <taxon>Chordata</taxon>
        <taxon>Craniata</taxon>
        <taxon>Vertebrata</taxon>
        <taxon>Euteleostomi</taxon>
        <taxon>Mammalia</taxon>
        <taxon>Eutheria</taxon>
        <taxon>Euarchontoglires</taxon>
        <taxon>Glires</taxon>
        <taxon>Rodentia</taxon>
        <taxon>Myomorpha</taxon>
        <taxon>Muroidea</taxon>
        <taxon>Muridae</taxon>
        <taxon>Murinae</taxon>
        <taxon>Mus</taxon>
        <taxon>Mus</taxon>
    </lineage>
</organism>
<gene>
    <name type="primary">Npr1</name>
    <name type="synonym">Npra</name>
</gene>
<protein>
    <recommendedName>
        <fullName>Atrial natriuretic peptide receptor 1</fullName>
        <ecNumber>4.6.1.2</ecNumber>
    </recommendedName>
    <alternativeName>
        <fullName>Atrial natriuretic peptide receptor type A</fullName>
        <shortName>ANP-A</shortName>
        <shortName>ANPR-A</shortName>
        <shortName>NPR-A</shortName>
    </alternativeName>
    <alternativeName>
        <fullName>Guanylate cyclase A</fullName>
        <shortName>GC-A</shortName>
    </alternativeName>
</protein>
<dbReference type="EC" id="4.6.1.2"/>
<dbReference type="EMBL" id="J05504">
    <property type="protein sequence ID" value="AAA37670.1"/>
    <property type="molecule type" value="mRNA"/>
</dbReference>
<dbReference type="EMBL" id="L31932">
    <property type="protein sequence ID" value="AAA66945.1"/>
    <property type="molecule type" value="mRNA"/>
</dbReference>
<dbReference type="CCDS" id="CCDS17529.1"/>
<dbReference type="PIR" id="A36568">
    <property type="entry name" value="OYMSAR"/>
</dbReference>
<dbReference type="PIR" id="I57963">
    <property type="entry name" value="I57963"/>
</dbReference>
<dbReference type="RefSeq" id="NP_032753.5">
    <property type="nucleotide sequence ID" value="NM_008727.5"/>
</dbReference>
<dbReference type="SMR" id="P18293"/>
<dbReference type="BioGRID" id="201830">
    <property type="interactions" value="4"/>
</dbReference>
<dbReference type="ComplexPortal" id="CPX-34">
    <property type="entry name" value="ANPR-A receptor complex"/>
</dbReference>
<dbReference type="FunCoup" id="P18293">
    <property type="interactions" value="518"/>
</dbReference>
<dbReference type="STRING" id="10090.ENSMUSP00000029540"/>
<dbReference type="GlyCosmos" id="P18293">
    <property type="glycosylation" value="6 sites, No reported glycans"/>
</dbReference>
<dbReference type="GlyGen" id="P18293">
    <property type="glycosylation" value="7 sites, 4 N-linked glycans (4 sites)"/>
</dbReference>
<dbReference type="iPTMnet" id="P18293"/>
<dbReference type="PhosphoSitePlus" id="P18293"/>
<dbReference type="CPTAC" id="non-CPTAC-3386"/>
<dbReference type="PaxDb" id="10090-ENSMUSP00000029540"/>
<dbReference type="ProteomicsDB" id="281996"/>
<dbReference type="Pumba" id="P18293"/>
<dbReference type="Antibodypedia" id="20386">
    <property type="antibodies" value="322 antibodies from 32 providers"/>
</dbReference>
<dbReference type="DNASU" id="18160"/>
<dbReference type="Ensembl" id="ENSMUST00000029540.13">
    <property type="protein sequence ID" value="ENSMUSP00000029540.7"/>
    <property type="gene ID" value="ENSMUSG00000027931.13"/>
</dbReference>
<dbReference type="GeneID" id="18160"/>
<dbReference type="KEGG" id="mmu:18160"/>
<dbReference type="UCSC" id="uc008qcg.1">
    <property type="organism name" value="mouse"/>
</dbReference>
<dbReference type="AGR" id="MGI:97371"/>
<dbReference type="CTD" id="4881"/>
<dbReference type="MGI" id="MGI:97371">
    <property type="gene designation" value="Npr1"/>
</dbReference>
<dbReference type="VEuPathDB" id="HostDB:ENSMUSG00000027931"/>
<dbReference type="eggNOG" id="KOG1023">
    <property type="taxonomic scope" value="Eukaryota"/>
</dbReference>
<dbReference type="GeneTree" id="ENSGT00940000156223"/>
<dbReference type="HOGENOM" id="CLU_001072_1_3_1"/>
<dbReference type="InParanoid" id="P18293"/>
<dbReference type="OMA" id="KCAYEKS"/>
<dbReference type="OrthoDB" id="302535at2759"/>
<dbReference type="PhylomeDB" id="P18293"/>
<dbReference type="TreeFam" id="TF106338"/>
<dbReference type="BRENDA" id="4.6.1.2">
    <property type="organism ID" value="3474"/>
</dbReference>
<dbReference type="Reactome" id="R-MMU-5578768">
    <property type="pathway name" value="Physiological factors"/>
</dbReference>
<dbReference type="BioGRID-ORCS" id="18160">
    <property type="hits" value="2 hits in 80 CRISPR screens"/>
</dbReference>
<dbReference type="ChiTaRS" id="Npr1">
    <property type="organism name" value="mouse"/>
</dbReference>
<dbReference type="PRO" id="PR:P18293"/>
<dbReference type="Proteomes" id="UP000000589">
    <property type="component" value="Chromosome 3"/>
</dbReference>
<dbReference type="RNAct" id="P18293">
    <property type="molecule type" value="protein"/>
</dbReference>
<dbReference type="Bgee" id="ENSMUSG00000027931">
    <property type="expression patterns" value="Expressed in yolk sac and 78 other cell types or tissues"/>
</dbReference>
<dbReference type="ExpressionAtlas" id="P18293">
    <property type="expression patterns" value="baseline and differential"/>
</dbReference>
<dbReference type="GO" id="GO:1990620">
    <property type="term" value="C:ANPR-A receptor complex"/>
    <property type="evidence" value="ECO:0000250"/>
    <property type="project" value="ComplexPortal"/>
</dbReference>
<dbReference type="GO" id="GO:0016020">
    <property type="term" value="C:membrane"/>
    <property type="evidence" value="ECO:0007669"/>
    <property type="project" value="UniProtKB-SubCell"/>
</dbReference>
<dbReference type="GO" id="GO:0043235">
    <property type="term" value="C:receptor complex"/>
    <property type="evidence" value="ECO:0000266"/>
    <property type="project" value="MGI"/>
</dbReference>
<dbReference type="GO" id="GO:0005524">
    <property type="term" value="F:ATP binding"/>
    <property type="evidence" value="ECO:0007669"/>
    <property type="project" value="InterPro"/>
</dbReference>
<dbReference type="GO" id="GO:0005525">
    <property type="term" value="F:GTP binding"/>
    <property type="evidence" value="ECO:0007669"/>
    <property type="project" value="UniProtKB-KW"/>
</dbReference>
<dbReference type="GO" id="GO:0004383">
    <property type="term" value="F:guanylate cyclase activity"/>
    <property type="evidence" value="ECO:0000314"/>
    <property type="project" value="MGI"/>
</dbReference>
<dbReference type="GO" id="GO:0016941">
    <property type="term" value="F:natriuretic peptide receptor activity"/>
    <property type="evidence" value="ECO:0000250"/>
    <property type="project" value="UniProtKB"/>
</dbReference>
<dbReference type="GO" id="GO:0017046">
    <property type="term" value="F:peptide hormone binding"/>
    <property type="evidence" value="ECO:0007669"/>
    <property type="project" value="Ensembl"/>
</dbReference>
<dbReference type="GO" id="GO:0004672">
    <property type="term" value="F:protein kinase activity"/>
    <property type="evidence" value="ECO:0007669"/>
    <property type="project" value="InterPro"/>
</dbReference>
<dbReference type="GO" id="GO:0097746">
    <property type="term" value="P:blood vessel diameter maintenance"/>
    <property type="evidence" value="ECO:0007669"/>
    <property type="project" value="UniProtKB-KW"/>
</dbReference>
<dbReference type="GO" id="GO:0019934">
    <property type="term" value="P:cGMP-mediated signaling"/>
    <property type="evidence" value="ECO:0007669"/>
    <property type="project" value="Ensembl"/>
</dbReference>
<dbReference type="GO" id="GO:0042417">
    <property type="term" value="P:dopamine metabolic process"/>
    <property type="evidence" value="ECO:0007669"/>
    <property type="project" value="Ensembl"/>
</dbReference>
<dbReference type="GO" id="GO:0048662">
    <property type="term" value="P:negative regulation of smooth muscle cell proliferation"/>
    <property type="evidence" value="ECO:0007669"/>
    <property type="project" value="Ensembl"/>
</dbReference>
<dbReference type="GO" id="GO:0010753">
    <property type="term" value="P:positive regulation of cGMP-mediated signaling"/>
    <property type="evidence" value="ECO:0007669"/>
    <property type="project" value="Ensembl"/>
</dbReference>
<dbReference type="GO" id="GO:0007168">
    <property type="term" value="P:receptor guanylyl cyclase signaling pathway"/>
    <property type="evidence" value="ECO:0000250"/>
    <property type="project" value="ComplexPortal"/>
</dbReference>
<dbReference type="GO" id="GO:0008217">
    <property type="term" value="P:regulation of blood pressure"/>
    <property type="evidence" value="ECO:0000314"/>
    <property type="project" value="ComplexPortal"/>
</dbReference>
<dbReference type="CDD" id="cd07302">
    <property type="entry name" value="CHD"/>
    <property type="match status" value="1"/>
</dbReference>
<dbReference type="CDD" id="cd06385">
    <property type="entry name" value="PBP1_NPR_A"/>
    <property type="match status" value="1"/>
</dbReference>
<dbReference type="CDD" id="cd14042">
    <property type="entry name" value="PK_GC-A_B"/>
    <property type="match status" value="1"/>
</dbReference>
<dbReference type="FunFam" id="1.10.510.10:FF:000270">
    <property type="entry name" value="Guanylate cyclase"/>
    <property type="match status" value="1"/>
</dbReference>
<dbReference type="FunFam" id="3.30.200.20:FF:001106">
    <property type="entry name" value="Guanylate cyclase"/>
    <property type="match status" value="1"/>
</dbReference>
<dbReference type="FunFam" id="3.30.70.1230:FF:000004">
    <property type="entry name" value="Guanylate cyclase"/>
    <property type="match status" value="1"/>
</dbReference>
<dbReference type="FunFam" id="3.40.50.2300:FF:000153">
    <property type="entry name" value="Guanylate cyclase"/>
    <property type="match status" value="1"/>
</dbReference>
<dbReference type="FunFam" id="3.40.50.2300:FF:000200">
    <property type="entry name" value="Guanylate cyclase"/>
    <property type="match status" value="1"/>
</dbReference>
<dbReference type="FunFam" id="3.40.50.2300:FF:000228">
    <property type="entry name" value="Guanylate cyclase"/>
    <property type="match status" value="1"/>
</dbReference>
<dbReference type="Gene3D" id="3.40.50.2300">
    <property type="match status" value="2"/>
</dbReference>
<dbReference type="Gene3D" id="3.30.70.1230">
    <property type="entry name" value="Nucleotide cyclase"/>
    <property type="match status" value="1"/>
</dbReference>
<dbReference type="Gene3D" id="1.10.510.10">
    <property type="entry name" value="Transferase(Phosphotransferase) domain 1"/>
    <property type="match status" value="1"/>
</dbReference>
<dbReference type="InterPro" id="IPR001054">
    <property type="entry name" value="A/G_cyclase"/>
</dbReference>
<dbReference type="InterPro" id="IPR018297">
    <property type="entry name" value="A/G_cyclase_CS"/>
</dbReference>
<dbReference type="InterPro" id="IPR001828">
    <property type="entry name" value="ANF_lig-bd_rcpt"/>
</dbReference>
<dbReference type="InterPro" id="IPR001170">
    <property type="entry name" value="ANPR/GUC"/>
</dbReference>
<dbReference type="InterPro" id="IPR050401">
    <property type="entry name" value="Cyclic_nucleotide_synthase"/>
</dbReference>
<dbReference type="InterPro" id="IPR011009">
    <property type="entry name" value="Kinase-like_dom_sf"/>
</dbReference>
<dbReference type="InterPro" id="IPR029787">
    <property type="entry name" value="Nucleotide_cyclase"/>
</dbReference>
<dbReference type="InterPro" id="IPR028082">
    <property type="entry name" value="Peripla_BP_I"/>
</dbReference>
<dbReference type="InterPro" id="IPR000719">
    <property type="entry name" value="Prot_kinase_dom"/>
</dbReference>
<dbReference type="InterPro" id="IPR001245">
    <property type="entry name" value="Ser-Thr/Tyr_kinase_cat_dom"/>
</dbReference>
<dbReference type="PANTHER" id="PTHR11920:SF300">
    <property type="entry name" value="ATRIAL NATRIURETIC PEPTIDE RECEPTOR 1"/>
    <property type="match status" value="1"/>
</dbReference>
<dbReference type="PANTHER" id="PTHR11920">
    <property type="entry name" value="GUANYLYL CYCLASE"/>
    <property type="match status" value="1"/>
</dbReference>
<dbReference type="Pfam" id="PF01094">
    <property type="entry name" value="ANF_receptor"/>
    <property type="match status" value="1"/>
</dbReference>
<dbReference type="Pfam" id="PF00211">
    <property type="entry name" value="Guanylate_cyc"/>
    <property type="match status" value="1"/>
</dbReference>
<dbReference type="Pfam" id="PF07714">
    <property type="entry name" value="PK_Tyr_Ser-Thr"/>
    <property type="match status" value="1"/>
</dbReference>
<dbReference type="PRINTS" id="PR00255">
    <property type="entry name" value="NATPEPTIDER"/>
</dbReference>
<dbReference type="SMART" id="SM00044">
    <property type="entry name" value="CYCc"/>
    <property type="match status" value="1"/>
</dbReference>
<dbReference type="SUPFAM" id="SSF55073">
    <property type="entry name" value="Nucleotide cyclase"/>
    <property type="match status" value="1"/>
</dbReference>
<dbReference type="SUPFAM" id="SSF53822">
    <property type="entry name" value="Periplasmic binding protein-like I"/>
    <property type="match status" value="1"/>
</dbReference>
<dbReference type="SUPFAM" id="SSF56112">
    <property type="entry name" value="Protein kinase-like (PK-like)"/>
    <property type="match status" value="1"/>
</dbReference>
<dbReference type="PROSITE" id="PS00458">
    <property type="entry name" value="ANF_RECEPTORS"/>
    <property type="match status" value="1"/>
</dbReference>
<dbReference type="PROSITE" id="PS00452">
    <property type="entry name" value="GUANYLATE_CYCLASE_1"/>
    <property type="match status" value="1"/>
</dbReference>
<dbReference type="PROSITE" id="PS50125">
    <property type="entry name" value="GUANYLATE_CYCLASE_2"/>
    <property type="match status" value="1"/>
</dbReference>
<dbReference type="PROSITE" id="PS50011">
    <property type="entry name" value="PROTEIN_KINASE_DOM"/>
    <property type="match status" value="1"/>
</dbReference>
<name>ANPRA_MOUSE</name>
<keyword id="KW-0141">cGMP biosynthesis</keyword>
<keyword id="KW-0868">Chloride</keyword>
<keyword id="KW-1015">Disulfide bond</keyword>
<keyword id="KW-0325">Glycoprotein</keyword>
<keyword id="KW-0342">GTP-binding</keyword>
<keyword id="KW-0456">Lyase</keyword>
<keyword id="KW-0472">Membrane</keyword>
<keyword id="KW-0547">Nucleotide-binding</keyword>
<keyword id="KW-0597">Phosphoprotein</keyword>
<keyword id="KW-0675">Receptor</keyword>
<keyword id="KW-1185">Reference proteome</keyword>
<keyword id="KW-0732">Signal</keyword>
<keyword id="KW-0812">Transmembrane</keyword>
<keyword id="KW-1133">Transmembrane helix</keyword>
<keyword id="KW-0838">Vasoactive</keyword>